<protein>
    <recommendedName>
        <fullName>Protocadherin alpha-9</fullName>
        <shortName>PCDH-alpha-9</shortName>
    </recommendedName>
</protein>
<accession>Q9Y5H5</accession>
<accession>O15053</accession>
<accession>Q2M3S5</accession>
<proteinExistence type="evidence at transcript level"/>
<gene>
    <name type="primary">PCDHA9</name>
    <name type="synonym">KIAA0345</name>
</gene>
<sequence length="950" mass="102402">MLYSSRGDPEGQPLLLSLLILAMWVVGSGQLHYSVPEEAEHGTFVGRIAQDLGLELAELVPRLFQLDSKGRGDLLEVNLQNGILFVNSRIDREELCGRSAECSIHLEVIVDRPLQVFHVDVEVKDINDNPPVFPATQKNLFIAESRPLDSRFPLEGASDADIGENALLTYRLSPNEYFFLDVPTSNQQVKPLGLVLRKLLDREETPELHLLLTATDGGKPELTGTVQLLITVLDNNDNAPVFDRTLYTVKLPENVSIGTLVIHPNASDLDEGLNGDIIYSFSSDVSPDIKSKFHMDPLSGAITVIGHMDFEESRAHKIPVEAVDKGFPPLAGHCTLLVEVVDVNDNAPQLTIKTLSVPVKEDAQLGTVIALISVIDLDADANGQVTCSLTPHVPFKLVSTYKNYYSLVLDRALDRESVSAYELVVTARDGGSPSLWATARVSVEVADVNDNAPAFAQSEYTVFVKENNPPGCHIFTVSARDADAQENALVSYSLVERRLGERSLSSYVSVHAESGKVYALQPLDHEELELLQFQVSARDAGVPPLGSNVTLQVFVLDENDNAPALLTPRMRGTDGAVSEMVLRSVGAGVVVGKVRAVDADSGYNAWLSYELQPETASASIPFRVGLYTGEISTTRALDETDAPRQRLLVLVKDHGEPALTATATVLVSLVESGQAPKSSSRASVGATGPEVTLVDVNVYLIIAICAVSSLLVLTLLLYTVLRCSAMPTEGECAPGKPTLVCSSAVGSWSYSQQRRQRVCSGEGKQKTDLMAFSPGLSPCAGSTERTGEPSASSDSTGKPRQPNPDWRYSASLRAGMHSSVHLEEAGILRAGPGGPDQQWPTVSSATPEPEAGEVSPPVGAGVNSNSWTFKYGPGNPKQSGPGELPDKFIIPGSPAIISIRQEPTNSQIDKSDFITFGKKEETKKKKKKKKGNKTQEKKEKGNSTTDNSDQ</sequence>
<feature type="signal peptide" evidence="2">
    <location>
        <begin position="1"/>
        <end position="29"/>
    </location>
</feature>
<feature type="chain" id="PRO_0000003900" description="Protocadherin alpha-9">
    <location>
        <begin position="30"/>
        <end position="950"/>
    </location>
</feature>
<feature type="topological domain" description="Extracellular" evidence="2">
    <location>
        <begin position="30"/>
        <end position="697"/>
    </location>
</feature>
<feature type="transmembrane region" description="Helical" evidence="2">
    <location>
        <begin position="698"/>
        <end position="718"/>
    </location>
</feature>
<feature type="topological domain" description="Cytoplasmic" evidence="2">
    <location>
        <begin position="719"/>
        <end position="950"/>
    </location>
</feature>
<feature type="domain" description="Cadherin 1" evidence="3">
    <location>
        <begin position="30"/>
        <end position="133"/>
    </location>
</feature>
<feature type="domain" description="Cadherin 2" evidence="3">
    <location>
        <begin position="134"/>
        <end position="242"/>
    </location>
</feature>
<feature type="domain" description="Cadherin 3" evidence="3">
    <location>
        <begin position="243"/>
        <end position="350"/>
    </location>
</feature>
<feature type="domain" description="Cadherin 4" evidence="3">
    <location>
        <begin position="351"/>
        <end position="455"/>
    </location>
</feature>
<feature type="domain" description="Cadherin 5" evidence="3">
    <location>
        <begin position="456"/>
        <end position="565"/>
    </location>
</feature>
<feature type="domain" description="Cadherin 6" evidence="3">
    <location>
        <begin position="588"/>
        <end position="678"/>
    </location>
</feature>
<feature type="repeat" description="PXXP 1">
    <location>
        <begin position="734"/>
        <end position="737"/>
    </location>
</feature>
<feature type="repeat" description="PXXP 2">
    <location>
        <begin position="799"/>
        <end position="802"/>
    </location>
</feature>
<feature type="repeat" description="PXXP 3">
    <location>
        <begin position="832"/>
        <end position="835"/>
    </location>
</feature>
<feature type="repeat" description="PXXP 4">
    <location>
        <begin position="873"/>
        <end position="876"/>
    </location>
</feature>
<feature type="repeat" description="PXXP 5">
    <location>
        <begin position="891"/>
        <end position="894"/>
    </location>
</feature>
<feature type="region of interest" description="5 X 4 AA repeats of P-X-X-P">
    <location>
        <begin position="734"/>
        <end position="894"/>
    </location>
</feature>
<feature type="region of interest" description="Disordered" evidence="4">
    <location>
        <begin position="770"/>
        <end position="808"/>
    </location>
</feature>
<feature type="region of interest" description="Disordered" evidence="4">
    <location>
        <begin position="827"/>
        <end position="856"/>
    </location>
</feature>
<feature type="region of interest" description="Disordered" evidence="4">
    <location>
        <begin position="871"/>
        <end position="950"/>
    </location>
</feature>
<feature type="compositionally biased region" description="Polar residues" evidence="4">
    <location>
        <begin position="789"/>
        <end position="798"/>
    </location>
</feature>
<feature type="compositionally biased region" description="Basic and acidic residues" evidence="4">
    <location>
        <begin position="909"/>
        <end position="923"/>
    </location>
</feature>
<feature type="glycosylation site" description="N-linked (GlcNAc...) asparagine" evidence="2">
    <location>
        <position position="254"/>
    </location>
</feature>
<feature type="glycosylation site" description="N-linked (GlcNAc...) asparagine" evidence="2">
    <location>
        <position position="265"/>
    </location>
</feature>
<feature type="glycosylation site" description="N-linked (GlcNAc...) asparagine" evidence="2">
    <location>
        <position position="548"/>
    </location>
</feature>
<feature type="splice variant" id="VSP_000688" description="In isoform 2." evidence="5">
    <original>PRQPNPDWRYSASLRAGMHSSVHLEEAGILRAGPGGPDQQWPTV</original>
    <variation>VGFSSILFIYIIFFLERYYRLLPGAVQIVLFIFLEIQQIFFLIK</variation>
    <location>
        <begin position="799"/>
        <end position="842"/>
    </location>
</feature>
<feature type="splice variant" id="VSP_000689" description="In isoform 2." evidence="5">
    <location>
        <begin position="843"/>
        <end position="950"/>
    </location>
</feature>
<feature type="sequence variant" id="VAR_048530" description="In dbSNP:rs251353.">
    <original>S</original>
    <variation>R</variation>
    <location>
        <position position="28"/>
    </location>
</feature>
<feature type="sequence variant" id="VAR_061062" description="In dbSNP:rs56926451.">
    <original>F</original>
    <variation>L</variation>
    <location>
        <position position="64"/>
    </location>
</feature>
<feature type="sequence variant" id="VAR_048531" description="In dbSNP:rs364101.">
    <original>K</original>
    <variation>R</variation>
    <location>
        <position position="138"/>
    </location>
</feature>
<feature type="sequence variant" id="VAR_048532" description="In dbSNP:rs251354.">
    <original>L</original>
    <variation>V</variation>
    <location>
        <position position="336"/>
    </location>
</feature>
<feature type="sequence variant" id="VAR_048533" description="In dbSNP:rs251355.">
    <original>G</original>
    <variation>R</variation>
    <location>
        <position position="430"/>
    </location>
</feature>
<feature type="sequence variant" id="VAR_061063" description="In dbSNP:rs59056023.">
    <original>E</original>
    <variation>Q</variation>
    <location>
        <position position="501"/>
    </location>
</feature>
<feature type="sequence variant" id="VAR_059182" description="In dbSNP:rs369636.">
    <original>K</original>
    <variation>Q</variation>
    <location>
        <position position="764"/>
    </location>
</feature>
<feature type="sequence variant" id="VAR_048534" description="In dbSNP:rs369639.">
    <original>K</original>
    <variation>T</variation>
    <location>
        <position position="764"/>
    </location>
</feature>
<keyword id="KW-0025">Alternative splicing</keyword>
<keyword id="KW-0106">Calcium</keyword>
<keyword id="KW-0130">Cell adhesion</keyword>
<keyword id="KW-1003">Cell membrane</keyword>
<keyword id="KW-0325">Glycoprotein</keyword>
<keyword id="KW-0472">Membrane</keyword>
<keyword id="KW-1185">Reference proteome</keyword>
<keyword id="KW-0677">Repeat</keyword>
<keyword id="KW-0732">Signal</keyword>
<keyword id="KW-0812">Transmembrane</keyword>
<keyword id="KW-1133">Transmembrane helix</keyword>
<organism>
    <name type="scientific">Homo sapiens</name>
    <name type="common">Human</name>
    <dbReference type="NCBI Taxonomy" id="9606"/>
    <lineage>
        <taxon>Eukaryota</taxon>
        <taxon>Metazoa</taxon>
        <taxon>Chordata</taxon>
        <taxon>Craniata</taxon>
        <taxon>Vertebrata</taxon>
        <taxon>Euteleostomi</taxon>
        <taxon>Mammalia</taxon>
        <taxon>Eutheria</taxon>
        <taxon>Euarchontoglires</taxon>
        <taxon>Primates</taxon>
        <taxon>Haplorrhini</taxon>
        <taxon>Catarrhini</taxon>
        <taxon>Hominidae</taxon>
        <taxon>Homo</taxon>
    </lineage>
</organism>
<name>PCDA9_HUMAN</name>
<evidence type="ECO:0000250" key="1"/>
<evidence type="ECO:0000255" key="2"/>
<evidence type="ECO:0000255" key="3">
    <source>
        <dbReference type="PROSITE-ProRule" id="PRU00043"/>
    </source>
</evidence>
<evidence type="ECO:0000256" key="4">
    <source>
        <dbReference type="SAM" id="MobiDB-lite"/>
    </source>
</evidence>
<evidence type="ECO:0000303" key="5">
    <source>
    </source>
</evidence>
<evidence type="ECO:0000305" key="6"/>
<comment type="function">
    <text>Potential calcium-dependent cell-adhesion protein. May be involved in the establishment and maintenance of specific neuronal connections in the brain.</text>
</comment>
<comment type="subcellular location">
    <subcellularLocation>
        <location evidence="1">Cell membrane</location>
        <topology evidence="1">Single-pass type I membrane protein</topology>
    </subcellularLocation>
</comment>
<comment type="alternative products">
    <event type="alternative splicing"/>
    <isoform>
        <id>Q9Y5H5-1</id>
        <name>1</name>
        <sequence type="displayed"/>
    </isoform>
    <isoform>
        <id>Q9Y5H5-2</id>
        <name>2</name>
        <sequence type="described" ref="VSP_000688 VSP_000689"/>
    </isoform>
</comment>
<comment type="sequence caution" evidence="6">
    <conflict type="erroneous initiation">
        <sequence resource="EMBL-CDS" id="BAA20803"/>
    </conflict>
</comment>
<reference key="1">
    <citation type="journal article" date="1999" name="Cell">
        <title>A striking organization of a large family of human neural cadherin-like cell adhesion genes.</title>
        <authorList>
            <person name="Wu Q."/>
            <person name="Maniatis T."/>
        </authorList>
    </citation>
    <scope>NUCLEOTIDE SEQUENCE [MRNA] (ISOFORM 1)</scope>
    <source>
        <tissue>Brain</tissue>
    </source>
</reference>
<reference key="2">
    <citation type="submission" date="1998-07" db="EMBL/GenBank/DDBJ databases">
        <title>In silico identification and molecular cloning of novel human protocadherin genes having identical 3' exons.</title>
        <authorList>
            <person name="Kools P.F.J."/>
            <person name="van Roy F."/>
        </authorList>
    </citation>
    <scope>NUCLEOTIDE SEQUENCE [MRNA] (ISOFORM 1)</scope>
    <source>
        <tissue>Fetal brain</tissue>
    </source>
</reference>
<reference key="3">
    <citation type="journal article" date="1997" name="DNA Res.">
        <title>Prediction of the coding sequences of unidentified human genes. VII. The complete sequences of 100 new cDNA clones from brain which can code for large proteins in vitro.</title>
        <authorList>
            <person name="Nagase T."/>
            <person name="Ishikawa K."/>
            <person name="Nakajima D."/>
            <person name="Ohira M."/>
            <person name="Seki N."/>
            <person name="Miyajima N."/>
            <person name="Tanaka A."/>
            <person name="Kotani H."/>
            <person name="Nomura N."/>
            <person name="Ohara O."/>
        </authorList>
    </citation>
    <scope>NUCLEOTIDE SEQUENCE [LARGE SCALE MRNA] (ISOFORM 2)</scope>
    <source>
        <tissue>Brain</tissue>
    </source>
</reference>
<reference key="4">
    <citation type="journal article" date="2004" name="Nature">
        <title>The DNA sequence and comparative analysis of human chromosome 5.</title>
        <authorList>
            <person name="Schmutz J."/>
            <person name="Martin J."/>
            <person name="Terry A."/>
            <person name="Couronne O."/>
            <person name="Grimwood J."/>
            <person name="Lowry S."/>
            <person name="Gordon L.A."/>
            <person name="Scott D."/>
            <person name="Xie G."/>
            <person name="Huang W."/>
            <person name="Hellsten U."/>
            <person name="Tran-Gyamfi M."/>
            <person name="She X."/>
            <person name="Prabhakar S."/>
            <person name="Aerts A."/>
            <person name="Altherr M."/>
            <person name="Bajorek E."/>
            <person name="Black S."/>
            <person name="Branscomb E."/>
            <person name="Caoile C."/>
            <person name="Challacombe J.F."/>
            <person name="Chan Y.M."/>
            <person name="Denys M."/>
            <person name="Detter J.C."/>
            <person name="Escobar J."/>
            <person name="Flowers D."/>
            <person name="Fotopulos D."/>
            <person name="Glavina T."/>
            <person name="Gomez M."/>
            <person name="Gonzales E."/>
            <person name="Goodstein D."/>
            <person name="Grigoriev I."/>
            <person name="Groza M."/>
            <person name="Hammon N."/>
            <person name="Hawkins T."/>
            <person name="Haydu L."/>
            <person name="Israni S."/>
            <person name="Jett J."/>
            <person name="Kadner K."/>
            <person name="Kimball H."/>
            <person name="Kobayashi A."/>
            <person name="Lopez F."/>
            <person name="Lou Y."/>
            <person name="Martinez D."/>
            <person name="Medina C."/>
            <person name="Morgan J."/>
            <person name="Nandkeshwar R."/>
            <person name="Noonan J.P."/>
            <person name="Pitluck S."/>
            <person name="Pollard M."/>
            <person name="Predki P."/>
            <person name="Priest J."/>
            <person name="Ramirez L."/>
            <person name="Retterer J."/>
            <person name="Rodriguez A."/>
            <person name="Rogers S."/>
            <person name="Salamov A."/>
            <person name="Salazar A."/>
            <person name="Thayer N."/>
            <person name="Tice H."/>
            <person name="Tsai M."/>
            <person name="Ustaszewska A."/>
            <person name="Vo N."/>
            <person name="Wheeler J."/>
            <person name="Wu K."/>
            <person name="Yang J."/>
            <person name="Dickson M."/>
            <person name="Cheng J.-F."/>
            <person name="Eichler E.E."/>
            <person name="Olsen A."/>
            <person name="Pennacchio L.A."/>
            <person name="Rokhsar D.S."/>
            <person name="Richardson P."/>
            <person name="Lucas S.M."/>
            <person name="Myers R.M."/>
            <person name="Rubin E.M."/>
        </authorList>
    </citation>
    <scope>NUCLEOTIDE SEQUENCE [LARGE SCALE GENOMIC DNA]</scope>
</reference>
<reference key="5">
    <citation type="journal article" date="2004" name="Genome Res.">
        <title>The status, quality, and expansion of the NIH full-length cDNA project: the Mammalian Gene Collection (MGC).</title>
        <authorList>
            <consortium name="The MGC Project Team"/>
        </authorList>
    </citation>
    <scope>NUCLEOTIDE SEQUENCE [LARGE SCALE MRNA] (ISOFORM 1)</scope>
    <source>
        <tissue>Brain</tissue>
    </source>
</reference>
<dbReference type="EMBL" id="AF152317">
    <property type="protein sequence ID" value="AAD43711.1"/>
    <property type="molecule type" value="mRNA"/>
</dbReference>
<dbReference type="EMBL" id="AF152487">
    <property type="protein sequence ID" value="AAD43748.1"/>
    <property type="molecule type" value="mRNA"/>
</dbReference>
<dbReference type="EMBL" id="AJ007610">
    <property type="protein sequence ID" value="CAC22257.1"/>
    <property type="molecule type" value="mRNA"/>
</dbReference>
<dbReference type="EMBL" id="AB002343">
    <property type="protein sequence ID" value="BAA20803.2"/>
    <property type="status" value="ALT_INIT"/>
    <property type="molecule type" value="mRNA"/>
</dbReference>
<dbReference type="EMBL" id="AC005609">
    <property type="protein sequence ID" value="AAC34313.1"/>
    <property type="molecule type" value="Genomic_DNA"/>
</dbReference>
<dbReference type="EMBL" id="BC104802">
    <property type="protein sequence ID" value="AAI04803.1"/>
    <property type="molecule type" value="mRNA"/>
</dbReference>
<dbReference type="EMBL" id="BC104804">
    <property type="protein sequence ID" value="AAI04805.1"/>
    <property type="molecule type" value="mRNA"/>
</dbReference>
<dbReference type="CCDS" id="CCDS54920.1">
    <molecule id="Q9Y5H5-1"/>
</dbReference>
<dbReference type="RefSeq" id="NP_054724.1">
    <molecule id="Q9Y5H5-2"/>
    <property type="nucleotide sequence ID" value="NM_014005.5"/>
</dbReference>
<dbReference type="RefSeq" id="NP_114063.1">
    <molecule id="Q9Y5H5-1"/>
    <property type="nucleotide sequence ID" value="NM_031857.2"/>
</dbReference>
<dbReference type="SMR" id="Q9Y5H5"/>
<dbReference type="BioGRID" id="115100">
    <property type="interactions" value="38"/>
</dbReference>
<dbReference type="FunCoup" id="Q9Y5H5">
    <property type="interactions" value="54"/>
</dbReference>
<dbReference type="IntAct" id="Q9Y5H5">
    <property type="interactions" value="31"/>
</dbReference>
<dbReference type="STRING" id="9606.ENSP00000436042"/>
<dbReference type="GlyCosmos" id="Q9Y5H5">
    <property type="glycosylation" value="3 sites, No reported glycans"/>
</dbReference>
<dbReference type="GlyGen" id="Q9Y5H5">
    <property type="glycosylation" value="3 sites"/>
</dbReference>
<dbReference type="iPTMnet" id="Q9Y5H5"/>
<dbReference type="PhosphoSitePlus" id="Q9Y5H5"/>
<dbReference type="BioMuta" id="PCDHA9"/>
<dbReference type="DMDM" id="13878426"/>
<dbReference type="jPOST" id="Q9Y5H5"/>
<dbReference type="MassIVE" id="Q9Y5H5"/>
<dbReference type="PaxDb" id="9606-ENSP00000436042"/>
<dbReference type="PeptideAtlas" id="Q9Y5H5"/>
<dbReference type="ProteomicsDB" id="86392">
    <molecule id="Q9Y5H5-1"/>
</dbReference>
<dbReference type="ProteomicsDB" id="86393">
    <molecule id="Q9Y5H5-2"/>
</dbReference>
<dbReference type="Antibodypedia" id="27165">
    <property type="antibodies" value="89 antibodies from 18 providers"/>
</dbReference>
<dbReference type="DNASU" id="9752"/>
<dbReference type="Ensembl" id="ENST00000378122.4">
    <molecule id="Q9Y5H5-2"/>
    <property type="protein sequence ID" value="ENSP00000367362.3"/>
    <property type="gene ID" value="ENSG00000204961.7"/>
</dbReference>
<dbReference type="Ensembl" id="ENST00000532602.2">
    <molecule id="Q9Y5H5-1"/>
    <property type="protein sequence ID" value="ENSP00000436042.2"/>
    <property type="gene ID" value="ENSG00000204961.7"/>
</dbReference>
<dbReference type="Ensembl" id="ENST00000708308.1">
    <molecule id="Q9Y5H5-2"/>
    <property type="protein sequence ID" value="ENSP00000517159.1"/>
    <property type="gene ID" value="ENSG00000291657.1"/>
</dbReference>
<dbReference type="Ensembl" id="ENST00000708309.1">
    <molecule id="Q9Y5H5-1"/>
    <property type="protein sequence ID" value="ENSP00000517160.1"/>
    <property type="gene ID" value="ENSG00000291657.1"/>
</dbReference>
<dbReference type="GeneID" id="9752"/>
<dbReference type="KEGG" id="hsa:9752"/>
<dbReference type="MANE-Select" id="ENST00000532602.2">
    <property type="protein sequence ID" value="ENSP00000436042.2"/>
    <property type="RefSeq nucleotide sequence ID" value="NM_031857.2"/>
    <property type="RefSeq protein sequence ID" value="NP_114063.1"/>
</dbReference>
<dbReference type="UCSC" id="uc003lht.2">
    <molecule id="Q9Y5H5-1"/>
    <property type="organism name" value="human"/>
</dbReference>
<dbReference type="AGR" id="HGNC:8675"/>
<dbReference type="CTD" id="9752"/>
<dbReference type="DisGeNET" id="9752"/>
<dbReference type="GeneCards" id="PCDHA9"/>
<dbReference type="HGNC" id="HGNC:8675">
    <property type="gene designation" value="PCDHA9"/>
</dbReference>
<dbReference type="HPA" id="ENSG00000204961">
    <property type="expression patterns" value="Tissue enhanced (testis)"/>
</dbReference>
<dbReference type="MalaCards" id="PCDHA9"/>
<dbReference type="MIM" id="604966">
    <property type="type" value="gene"/>
</dbReference>
<dbReference type="MIM" id="606315">
    <property type="type" value="gene"/>
</dbReference>
<dbReference type="neXtProt" id="NX_Q9Y5H5"/>
<dbReference type="OpenTargets" id="ENSG00000204961"/>
<dbReference type="PharmGKB" id="PA33021"/>
<dbReference type="VEuPathDB" id="HostDB:ENSG00000204961"/>
<dbReference type="eggNOG" id="KOG3594">
    <property type="taxonomic scope" value="Eukaryota"/>
</dbReference>
<dbReference type="GeneTree" id="ENSGT00940000163312"/>
<dbReference type="HOGENOM" id="CLU_006480_0_0_1"/>
<dbReference type="InParanoid" id="Q9Y5H5"/>
<dbReference type="OMA" id="KEMFTID"/>
<dbReference type="OrthoDB" id="6252479at2759"/>
<dbReference type="PAN-GO" id="Q9Y5H5">
    <property type="GO annotations" value="2 GO annotations based on evolutionary models"/>
</dbReference>
<dbReference type="PhylomeDB" id="Q9Y5H5"/>
<dbReference type="TreeFam" id="TF332299"/>
<dbReference type="PathwayCommons" id="Q9Y5H5"/>
<dbReference type="SignaLink" id="Q9Y5H5"/>
<dbReference type="SIGNOR" id="Q9Y5H5"/>
<dbReference type="BioGRID-ORCS" id="9752">
    <property type="hits" value="8 hits in 1097 CRISPR screens"/>
</dbReference>
<dbReference type="GeneWiki" id="PCDHA9"/>
<dbReference type="GenomeRNAi" id="9752"/>
<dbReference type="Pharos" id="Q9Y5H5">
    <property type="development level" value="Tbio"/>
</dbReference>
<dbReference type="PRO" id="PR:Q9Y5H5"/>
<dbReference type="Proteomes" id="UP000005640">
    <property type="component" value="Chromosome 5"/>
</dbReference>
<dbReference type="RNAct" id="Q9Y5H5">
    <property type="molecule type" value="protein"/>
</dbReference>
<dbReference type="Bgee" id="ENSG00000204961">
    <property type="expression patterns" value="Expressed in buccal mucosa cell and 51 other cell types or tissues"/>
</dbReference>
<dbReference type="GO" id="GO:0005886">
    <property type="term" value="C:plasma membrane"/>
    <property type="evidence" value="ECO:0000318"/>
    <property type="project" value="GO_Central"/>
</dbReference>
<dbReference type="GO" id="GO:0005509">
    <property type="term" value="F:calcium ion binding"/>
    <property type="evidence" value="ECO:0007669"/>
    <property type="project" value="InterPro"/>
</dbReference>
<dbReference type="GO" id="GO:0007155">
    <property type="term" value="P:cell adhesion"/>
    <property type="evidence" value="ECO:0000318"/>
    <property type="project" value="GO_Central"/>
</dbReference>
<dbReference type="GO" id="GO:0007156">
    <property type="term" value="P:homophilic cell adhesion via plasma membrane adhesion molecules"/>
    <property type="evidence" value="ECO:0007669"/>
    <property type="project" value="InterPro"/>
</dbReference>
<dbReference type="GO" id="GO:0007399">
    <property type="term" value="P:nervous system development"/>
    <property type="evidence" value="ECO:0007669"/>
    <property type="project" value="UniProtKB-ARBA"/>
</dbReference>
<dbReference type="CDD" id="cd11304">
    <property type="entry name" value="Cadherin_repeat"/>
    <property type="match status" value="6"/>
</dbReference>
<dbReference type="FunFam" id="2.60.40.60:FF:000001">
    <property type="entry name" value="Protocadherin alpha 2"/>
    <property type="match status" value="1"/>
</dbReference>
<dbReference type="FunFam" id="2.60.40.60:FF:000002">
    <property type="entry name" value="Protocadherin alpha 2"/>
    <property type="match status" value="1"/>
</dbReference>
<dbReference type="FunFam" id="2.60.40.60:FF:000003">
    <property type="entry name" value="Protocadherin alpha 2"/>
    <property type="match status" value="1"/>
</dbReference>
<dbReference type="FunFam" id="2.60.40.60:FF:000006">
    <property type="entry name" value="Protocadherin alpha 2"/>
    <property type="match status" value="1"/>
</dbReference>
<dbReference type="FunFam" id="2.60.40.60:FF:000007">
    <property type="entry name" value="Protocadherin alpha 2"/>
    <property type="match status" value="1"/>
</dbReference>
<dbReference type="FunFam" id="2.60.40.60:FF:000076">
    <property type="entry name" value="Protocadherin alpha 2"/>
    <property type="match status" value="1"/>
</dbReference>
<dbReference type="Gene3D" id="2.60.40.60">
    <property type="entry name" value="Cadherins"/>
    <property type="match status" value="6"/>
</dbReference>
<dbReference type="InterPro" id="IPR002126">
    <property type="entry name" value="Cadherin-like_dom"/>
</dbReference>
<dbReference type="InterPro" id="IPR015919">
    <property type="entry name" value="Cadherin-like_sf"/>
</dbReference>
<dbReference type="InterPro" id="IPR031904">
    <property type="entry name" value="Cadherin_CBD"/>
</dbReference>
<dbReference type="InterPro" id="IPR020894">
    <property type="entry name" value="Cadherin_CS"/>
</dbReference>
<dbReference type="InterPro" id="IPR013164">
    <property type="entry name" value="Cadherin_N"/>
</dbReference>
<dbReference type="InterPro" id="IPR050174">
    <property type="entry name" value="Protocadherin/Cadherin-CA"/>
</dbReference>
<dbReference type="PANTHER" id="PTHR24028">
    <property type="entry name" value="CADHERIN-87A"/>
    <property type="match status" value="1"/>
</dbReference>
<dbReference type="PANTHER" id="PTHR24028:SF255">
    <property type="entry name" value="PROTOCADHERIN ALPHA-9"/>
    <property type="match status" value="1"/>
</dbReference>
<dbReference type="Pfam" id="PF00028">
    <property type="entry name" value="Cadherin"/>
    <property type="match status" value="5"/>
</dbReference>
<dbReference type="Pfam" id="PF08266">
    <property type="entry name" value="Cadherin_2"/>
    <property type="match status" value="1"/>
</dbReference>
<dbReference type="Pfam" id="PF15974">
    <property type="entry name" value="Cadherin_tail"/>
    <property type="match status" value="1"/>
</dbReference>
<dbReference type="PRINTS" id="PR00205">
    <property type="entry name" value="CADHERIN"/>
</dbReference>
<dbReference type="SMART" id="SM00112">
    <property type="entry name" value="CA"/>
    <property type="match status" value="6"/>
</dbReference>
<dbReference type="SUPFAM" id="SSF49313">
    <property type="entry name" value="Cadherin-like"/>
    <property type="match status" value="6"/>
</dbReference>
<dbReference type="PROSITE" id="PS00232">
    <property type="entry name" value="CADHERIN_1"/>
    <property type="match status" value="5"/>
</dbReference>
<dbReference type="PROSITE" id="PS50268">
    <property type="entry name" value="CADHERIN_2"/>
    <property type="match status" value="6"/>
</dbReference>